<keyword id="KW-0963">Cytoplasm</keyword>
<keyword id="KW-0312">Gluconeogenesis</keyword>
<keyword id="KW-0324">Glycolysis</keyword>
<keyword id="KW-0413">Isomerase</keyword>
<keyword id="KW-1185">Reference proteome</keyword>
<name>G6PI_CAUVC</name>
<reference key="1">
    <citation type="journal article" date="2001" name="Proc. Natl. Acad. Sci. U.S.A.">
        <title>Complete genome sequence of Caulobacter crescentus.</title>
        <authorList>
            <person name="Nierman W.C."/>
            <person name="Feldblyum T.V."/>
            <person name="Laub M.T."/>
            <person name="Paulsen I.T."/>
            <person name="Nelson K.E."/>
            <person name="Eisen J.A."/>
            <person name="Heidelberg J.F."/>
            <person name="Alley M.R.K."/>
            <person name="Ohta N."/>
            <person name="Maddock J.R."/>
            <person name="Potocka I."/>
            <person name="Nelson W.C."/>
            <person name="Newton A."/>
            <person name="Stephens C."/>
            <person name="Phadke N.D."/>
            <person name="Ely B."/>
            <person name="DeBoy R.T."/>
            <person name="Dodson R.J."/>
            <person name="Durkin A.S."/>
            <person name="Gwinn M.L."/>
            <person name="Haft D.H."/>
            <person name="Kolonay J.F."/>
            <person name="Smit J."/>
            <person name="Craven M.B."/>
            <person name="Khouri H.M."/>
            <person name="Shetty J."/>
            <person name="Berry K.J."/>
            <person name="Utterback T.R."/>
            <person name="Tran K."/>
            <person name="Wolf A.M."/>
            <person name="Vamathevan J.J."/>
            <person name="Ermolaeva M.D."/>
            <person name="White O."/>
            <person name="Salzberg S.L."/>
            <person name="Venter J.C."/>
            <person name="Shapiro L."/>
            <person name="Fraser C.M."/>
        </authorList>
    </citation>
    <scope>NUCLEOTIDE SEQUENCE [LARGE SCALE GENOMIC DNA]</scope>
    <source>
        <strain>ATCC 19089 / CIP 103742 / CB 15</strain>
    </source>
</reference>
<comment type="function">
    <text evidence="1">Catalyzes the reversible isomerization of glucose-6-phosphate to fructose-6-phosphate.</text>
</comment>
<comment type="catalytic activity">
    <reaction evidence="1">
        <text>alpha-D-glucose 6-phosphate = beta-D-fructose 6-phosphate</text>
        <dbReference type="Rhea" id="RHEA:11816"/>
        <dbReference type="ChEBI" id="CHEBI:57634"/>
        <dbReference type="ChEBI" id="CHEBI:58225"/>
        <dbReference type="EC" id="5.3.1.9"/>
    </reaction>
</comment>
<comment type="pathway">
    <text evidence="1">Carbohydrate biosynthesis; gluconeogenesis.</text>
</comment>
<comment type="pathway">
    <text evidence="1">Carbohydrate degradation; glycolysis; D-glyceraldehyde 3-phosphate and glycerone phosphate from D-glucose: step 2/4.</text>
</comment>
<comment type="subcellular location">
    <subcellularLocation>
        <location evidence="1">Cytoplasm</location>
    </subcellularLocation>
</comment>
<comment type="similarity">
    <text evidence="1 3">Belongs to the GPI family.</text>
</comment>
<organism>
    <name type="scientific">Caulobacter vibrioides (strain ATCC 19089 / CIP 103742 / CB 15)</name>
    <name type="common">Caulobacter crescentus</name>
    <dbReference type="NCBI Taxonomy" id="190650"/>
    <lineage>
        <taxon>Bacteria</taxon>
        <taxon>Pseudomonadati</taxon>
        <taxon>Pseudomonadota</taxon>
        <taxon>Alphaproteobacteria</taxon>
        <taxon>Caulobacterales</taxon>
        <taxon>Caulobacteraceae</taxon>
        <taxon>Caulobacter</taxon>
    </lineage>
</organism>
<evidence type="ECO:0000255" key="1">
    <source>
        <dbReference type="HAMAP-Rule" id="MF_00473"/>
    </source>
</evidence>
<evidence type="ECO:0000256" key="2">
    <source>
        <dbReference type="SAM" id="MobiDB-lite"/>
    </source>
</evidence>
<evidence type="ECO:0000305" key="3"/>
<dbReference type="EC" id="5.3.1.9" evidence="1"/>
<dbReference type="EMBL" id="AE005673">
    <property type="protein sequence ID" value="AAK22209.1"/>
    <property type="molecule type" value="Genomic_DNA"/>
</dbReference>
<dbReference type="PIR" id="E87276">
    <property type="entry name" value="E87276"/>
</dbReference>
<dbReference type="RefSeq" id="NP_419041.1">
    <property type="nucleotide sequence ID" value="NC_002696.2"/>
</dbReference>
<dbReference type="RefSeq" id="WP_010918111.1">
    <property type="nucleotide sequence ID" value="NC_002696.2"/>
</dbReference>
<dbReference type="SMR" id="Q9ABK5"/>
<dbReference type="STRING" id="190650.CC_0222"/>
<dbReference type="EnsemblBacteria" id="AAK22209">
    <property type="protein sequence ID" value="AAK22209"/>
    <property type="gene ID" value="CC_0222"/>
</dbReference>
<dbReference type="KEGG" id="ccr:CC_0222"/>
<dbReference type="PATRIC" id="fig|190650.5.peg.218"/>
<dbReference type="eggNOG" id="COG0166">
    <property type="taxonomic scope" value="Bacteria"/>
</dbReference>
<dbReference type="HOGENOM" id="CLU_017947_3_1_5"/>
<dbReference type="BioCyc" id="CAULO:CC0222-MONOMER"/>
<dbReference type="UniPathway" id="UPA00109">
    <property type="reaction ID" value="UER00181"/>
</dbReference>
<dbReference type="UniPathway" id="UPA00138"/>
<dbReference type="Proteomes" id="UP000001816">
    <property type="component" value="Chromosome"/>
</dbReference>
<dbReference type="GO" id="GO:0005829">
    <property type="term" value="C:cytosol"/>
    <property type="evidence" value="ECO:0007669"/>
    <property type="project" value="TreeGrafter"/>
</dbReference>
<dbReference type="GO" id="GO:0097367">
    <property type="term" value="F:carbohydrate derivative binding"/>
    <property type="evidence" value="ECO:0007669"/>
    <property type="project" value="InterPro"/>
</dbReference>
<dbReference type="GO" id="GO:0004347">
    <property type="term" value="F:glucose-6-phosphate isomerase activity"/>
    <property type="evidence" value="ECO:0007669"/>
    <property type="project" value="UniProtKB-UniRule"/>
</dbReference>
<dbReference type="GO" id="GO:0048029">
    <property type="term" value="F:monosaccharide binding"/>
    <property type="evidence" value="ECO:0007669"/>
    <property type="project" value="TreeGrafter"/>
</dbReference>
<dbReference type="GO" id="GO:0006094">
    <property type="term" value="P:gluconeogenesis"/>
    <property type="evidence" value="ECO:0007669"/>
    <property type="project" value="UniProtKB-UniRule"/>
</dbReference>
<dbReference type="GO" id="GO:0051156">
    <property type="term" value="P:glucose 6-phosphate metabolic process"/>
    <property type="evidence" value="ECO:0007669"/>
    <property type="project" value="TreeGrafter"/>
</dbReference>
<dbReference type="GO" id="GO:0006096">
    <property type="term" value="P:glycolytic process"/>
    <property type="evidence" value="ECO:0007669"/>
    <property type="project" value="UniProtKB-UniRule"/>
</dbReference>
<dbReference type="CDD" id="cd05015">
    <property type="entry name" value="SIS_PGI_1"/>
    <property type="match status" value="1"/>
</dbReference>
<dbReference type="CDD" id="cd05016">
    <property type="entry name" value="SIS_PGI_2"/>
    <property type="match status" value="1"/>
</dbReference>
<dbReference type="Gene3D" id="1.10.1390.10">
    <property type="match status" value="1"/>
</dbReference>
<dbReference type="Gene3D" id="3.40.50.10490">
    <property type="entry name" value="Glucose-6-phosphate isomerase like protein, domain 1"/>
    <property type="match status" value="2"/>
</dbReference>
<dbReference type="HAMAP" id="MF_00473">
    <property type="entry name" value="G6P_isomerase"/>
    <property type="match status" value="1"/>
</dbReference>
<dbReference type="InterPro" id="IPR001672">
    <property type="entry name" value="G6P_Isomerase"/>
</dbReference>
<dbReference type="InterPro" id="IPR023096">
    <property type="entry name" value="G6P_Isomerase_C"/>
</dbReference>
<dbReference type="InterPro" id="IPR018189">
    <property type="entry name" value="Phosphoglucose_isomerase_CS"/>
</dbReference>
<dbReference type="InterPro" id="IPR046348">
    <property type="entry name" value="SIS_dom_sf"/>
</dbReference>
<dbReference type="InterPro" id="IPR035476">
    <property type="entry name" value="SIS_PGI_1"/>
</dbReference>
<dbReference type="InterPro" id="IPR035482">
    <property type="entry name" value="SIS_PGI_2"/>
</dbReference>
<dbReference type="NCBIfam" id="NF001211">
    <property type="entry name" value="PRK00179.1"/>
    <property type="match status" value="1"/>
</dbReference>
<dbReference type="PANTHER" id="PTHR11469">
    <property type="entry name" value="GLUCOSE-6-PHOSPHATE ISOMERASE"/>
    <property type="match status" value="1"/>
</dbReference>
<dbReference type="PANTHER" id="PTHR11469:SF1">
    <property type="entry name" value="GLUCOSE-6-PHOSPHATE ISOMERASE"/>
    <property type="match status" value="1"/>
</dbReference>
<dbReference type="Pfam" id="PF00342">
    <property type="entry name" value="PGI"/>
    <property type="match status" value="1"/>
</dbReference>
<dbReference type="PRINTS" id="PR00662">
    <property type="entry name" value="G6PISOMERASE"/>
</dbReference>
<dbReference type="SUPFAM" id="SSF53697">
    <property type="entry name" value="SIS domain"/>
    <property type="match status" value="1"/>
</dbReference>
<dbReference type="PROSITE" id="PS00765">
    <property type="entry name" value="P_GLUCOSE_ISOMERASE_1"/>
    <property type="match status" value="1"/>
</dbReference>
<dbReference type="PROSITE" id="PS00174">
    <property type="entry name" value="P_GLUCOSE_ISOMERASE_2"/>
    <property type="match status" value="1"/>
</dbReference>
<dbReference type="PROSITE" id="PS51463">
    <property type="entry name" value="P_GLUCOSE_ISOMERASE_3"/>
    <property type="match status" value="1"/>
</dbReference>
<accession>Q9ABK5</accession>
<feature type="chain" id="PRO_0000180617" description="Glucose-6-phosphate isomerase">
    <location>
        <begin position="1"/>
        <end position="539"/>
    </location>
</feature>
<feature type="region of interest" description="Disordered" evidence="2">
    <location>
        <begin position="519"/>
        <end position="539"/>
    </location>
</feature>
<feature type="active site" description="Proton donor" evidence="1">
    <location>
        <position position="349"/>
    </location>
</feature>
<feature type="active site" evidence="1">
    <location>
        <position position="380"/>
    </location>
</feature>
<feature type="active site" evidence="1">
    <location>
        <position position="508"/>
    </location>
</feature>
<gene>
    <name evidence="1" type="primary">pgi</name>
    <name type="ordered locus">CC_0222</name>
</gene>
<proteinExistence type="inferred from homology"/>
<sequence length="539" mass="57526">MADLDAAWTRLEAAAKAAGDKRIVEFFDAEPGRLDALTLDVAGLHLDLSKQAWDEAGLEAALDLAHAADVEGARARMFDGEAINSSEGRAVLHTALRAPAGADVKALGQPVMAEVDAVRQRMKAFAQAVRSGAIKGATGKPFKAILHIGIGGSDLGPRLLWDALRPVKPSIDLRFVANVDGAEFALTTADMDPEETLVMVVSKTFTTQETMANAGAARAWLVAALGEQGANQHLAAISTALDKTAAFGVPDDRVFGFWDWVGGRYSLWSSVSLSVAVAAGWDAFQGFLDGGAAMDEHFRTAPLEQNAPVLVALAQIFNRNGLDRRARSVVPYSHRLRRLAAFLQQLEMESNGKSVGPDGQPAKRGTATVVFGDEGTNVQHAYFQCMHQGTDITPMELIGVAKSDEGPAGMHEKLLSNLLAQAEAFMVGRTTDDVVAELTAKGVSDAEIATLAPQRTFAGNRPSTLVLLDRLTPQTFGALIALYEHKTFVEGVIWGINSFDQWGVELGKVMANRILPELESGASGQHDPSTAGLIQRLKR</sequence>
<protein>
    <recommendedName>
        <fullName evidence="1">Glucose-6-phosphate isomerase</fullName>
        <shortName evidence="1">GPI</shortName>
        <ecNumber evidence="1">5.3.1.9</ecNumber>
    </recommendedName>
    <alternativeName>
        <fullName evidence="1">Phosphoglucose isomerase</fullName>
        <shortName evidence="1">PGI</shortName>
    </alternativeName>
    <alternativeName>
        <fullName evidence="1">Phosphohexose isomerase</fullName>
        <shortName evidence="1">PHI</shortName>
    </alternativeName>
</protein>